<name>PNP_RHOP2</name>
<proteinExistence type="inferred from homology"/>
<evidence type="ECO:0000255" key="1">
    <source>
        <dbReference type="HAMAP-Rule" id="MF_01595"/>
    </source>
</evidence>
<evidence type="ECO:0000256" key="2">
    <source>
        <dbReference type="SAM" id="MobiDB-lite"/>
    </source>
</evidence>
<dbReference type="EC" id="2.7.7.8" evidence="1"/>
<dbReference type="EMBL" id="CP000250">
    <property type="protein sequence ID" value="ABD05316.1"/>
    <property type="molecule type" value="Genomic_DNA"/>
</dbReference>
<dbReference type="RefSeq" id="WP_011439506.1">
    <property type="nucleotide sequence ID" value="NC_007778.1"/>
</dbReference>
<dbReference type="SMR" id="Q2J2J4"/>
<dbReference type="STRING" id="316058.RPB_0605"/>
<dbReference type="KEGG" id="rpb:RPB_0605"/>
<dbReference type="eggNOG" id="COG1185">
    <property type="taxonomic scope" value="Bacteria"/>
</dbReference>
<dbReference type="HOGENOM" id="CLU_004217_2_2_5"/>
<dbReference type="OrthoDB" id="9804305at2"/>
<dbReference type="Proteomes" id="UP000008809">
    <property type="component" value="Chromosome"/>
</dbReference>
<dbReference type="GO" id="GO:0005829">
    <property type="term" value="C:cytosol"/>
    <property type="evidence" value="ECO:0007669"/>
    <property type="project" value="TreeGrafter"/>
</dbReference>
<dbReference type="GO" id="GO:0000175">
    <property type="term" value="F:3'-5'-RNA exonuclease activity"/>
    <property type="evidence" value="ECO:0007669"/>
    <property type="project" value="TreeGrafter"/>
</dbReference>
<dbReference type="GO" id="GO:0000287">
    <property type="term" value="F:magnesium ion binding"/>
    <property type="evidence" value="ECO:0007669"/>
    <property type="project" value="UniProtKB-UniRule"/>
</dbReference>
<dbReference type="GO" id="GO:0004654">
    <property type="term" value="F:polyribonucleotide nucleotidyltransferase activity"/>
    <property type="evidence" value="ECO:0007669"/>
    <property type="project" value="UniProtKB-UniRule"/>
</dbReference>
<dbReference type="GO" id="GO:0003723">
    <property type="term" value="F:RNA binding"/>
    <property type="evidence" value="ECO:0007669"/>
    <property type="project" value="UniProtKB-UniRule"/>
</dbReference>
<dbReference type="GO" id="GO:0006402">
    <property type="term" value="P:mRNA catabolic process"/>
    <property type="evidence" value="ECO:0007669"/>
    <property type="project" value="UniProtKB-UniRule"/>
</dbReference>
<dbReference type="GO" id="GO:0006396">
    <property type="term" value="P:RNA processing"/>
    <property type="evidence" value="ECO:0007669"/>
    <property type="project" value="InterPro"/>
</dbReference>
<dbReference type="CDD" id="cd02393">
    <property type="entry name" value="KH-I_PNPase"/>
    <property type="match status" value="1"/>
</dbReference>
<dbReference type="CDD" id="cd11363">
    <property type="entry name" value="RNase_PH_PNPase_1"/>
    <property type="match status" value="1"/>
</dbReference>
<dbReference type="CDD" id="cd11364">
    <property type="entry name" value="RNase_PH_PNPase_2"/>
    <property type="match status" value="1"/>
</dbReference>
<dbReference type="CDD" id="cd04472">
    <property type="entry name" value="S1_PNPase"/>
    <property type="match status" value="1"/>
</dbReference>
<dbReference type="FunFam" id="2.40.50.140:FF:000107">
    <property type="entry name" value="Polyribonucleotide nucleotidyltransferase"/>
    <property type="match status" value="1"/>
</dbReference>
<dbReference type="FunFam" id="3.30.1370.10:FF:000001">
    <property type="entry name" value="Polyribonucleotide nucleotidyltransferase"/>
    <property type="match status" value="1"/>
</dbReference>
<dbReference type="FunFam" id="3.30.230.70:FF:000001">
    <property type="entry name" value="Polyribonucleotide nucleotidyltransferase"/>
    <property type="match status" value="1"/>
</dbReference>
<dbReference type="FunFam" id="3.30.230.70:FF:000002">
    <property type="entry name" value="Polyribonucleotide nucleotidyltransferase"/>
    <property type="match status" value="1"/>
</dbReference>
<dbReference type="Gene3D" id="3.30.230.70">
    <property type="entry name" value="GHMP Kinase, N-terminal domain"/>
    <property type="match status" value="2"/>
</dbReference>
<dbReference type="Gene3D" id="3.30.1370.10">
    <property type="entry name" value="K Homology domain, type 1"/>
    <property type="match status" value="1"/>
</dbReference>
<dbReference type="Gene3D" id="2.40.50.140">
    <property type="entry name" value="Nucleic acid-binding proteins"/>
    <property type="match status" value="1"/>
</dbReference>
<dbReference type="HAMAP" id="MF_01595">
    <property type="entry name" value="PNPase"/>
    <property type="match status" value="1"/>
</dbReference>
<dbReference type="InterPro" id="IPR001247">
    <property type="entry name" value="ExoRNase_PH_dom1"/>
</dbReference>
<dbReference type="InterPro" id="IPR015847">
    <property type="entry name" value="ExoRNase_PH_dom2"/>
</dbReference>
<dbReference type="InterPro" id="IPR036345">
    <property type="entry name" value="ExoRNase_PH_dom2_sf"/>
</dbReference>
<dbReference type="InterPro" id="IPR004087">
    <property type="entry name" value="KH_dom"/>
</dbReference>
<dbReference type="InterPro" id="IPR004088">
    <property type="entry name" value="KH_dom_type_1"/>
</dbReference>
<dbReference type="InterPro" id="IPR036612">
    <property type="entry name" value="KH_dom_type_1_sf"/>
</dbReference>
<dbReference type="InterPro" id="IPR012340">
    <property type="entry name" value="NA-bd_OB-fold"/>
</dbReference>
<dbReference type="InterPro" id="IPR012162">
    <property type="entry name" value="PNPase"/>
</dbReference>
<dbReference type="InterPro" id="IPR027408">
    <property type="entry name" value="PNPase/RNase_PH_dom_sf"/>
</dbReference>
<dbReference type="InterPro" id="IPR015848">
    <property type="entry name" value="PNPase_PH_RNA-bd_bac/org-type"/>
</dbReference>
<dbReference type="InterPro" id="IPR036456">
    <property type="entry name" value="PNPase_PH_RNA-bd_sf"/>
</dbReference>
<dbReference type="InterPro" id="IPR020568">
    <property type="entry name" value="Ribosomal_Su5_D2-typ_SF"/>
</dbReference>
<dbReference type="InterPro" id="IPR003029">
    <property type="entry name" value="S1_domain"/>
</dbReference>
<dbReference type="NCBIfam" id="TIGR03591">
    <property type="entry name" value="polynuc_phos"/>
    <property type="match status" value="1"/>
</dbReference>
<dbReference type="NCBIfam" id="NF008805">
    <property type="entry name" value="PRK11824.1"/>
    <property type="match status" value="1"/>
</dbReference>
<dbReference type="PANTHER" id="PTHR11252">
    <property type="entry name" value="POLYRIBONUCLEOTIDE NUCLEOTIDYLTRANSFERASE"/>
    <property type="match status" value="1"/>
</dbReference>
<dbReference type="PANTHER" id="PTHR11252:SF0">
    <property type="entry name" value="POLYRIBONUCLEOTIDE NUCLEOTIDYLTRANSFERASE 1, MITOCHONDRIAL"/>
    <property type="match status" value="1"/>
</dbReference>
<dbReference type="Pfam" id="PF00013">
    <property type="entry name" value="KH_1"/>
    <property type="match status" value="1"/>
</dbReference>
<dbReference type="Pfam" id="PF03726">
    <property type="entry name" value="PNPase"/>
    <property type="match status" value="1"/>
</dbReference>
<dbReference type="Pfam" id="PF01138">
    <property type="entry name" value="RNase_PH"/>
    <property type="match status" value="2"/>
</dbReference>
<dbReference type="Pfam" id="PF03725">
    <property type="entry name" value="RNase_PH_C"/>
    <property type="match status" value="2"/>
</dbReference>
<dbReference type="Pfam" id="PF00575">
    <property type="entry name" value="S1"/>
    <property type="match status" value="1"/>
</dbReference>
<dbReference type="PIRSF" id="PIRSF005499">
    <property type="entry name" value="PNPase"/>
    <property type="match status" value="1"/>
</dbReference>
<dbReference type="SMART" id="SM00322">
    <property type="entry name" value="KH"/>
    <property type="match status" value="1"/>
</dbReference>
<dbReference type="SMART" id="SM00316">
    <property type="entry name" value="S1"/>
    <property type="match status" value="1"/>
</dbReference>
<dbReference type="SUPFAM" id="SSF54791">
    <property type="entry name" value="Eukaryotic type KH-domain (KH-domain type I)"/>
    <property type="match status" value="1"/>
</dbReference>
<dbReference type="SUPFAM" id="SSF50249">
    <property type="entry name" value="Nucleic acid-binding proteins"/>
    <property type="match status" value="1"/>
</dbReference>
<dbReference type="SUPFAM" id="SSF46915">
    <property type="entry name" value="Polynucleotide phosphorylase/guanosine pentaphosphate synthase (PNPase/GPSI), domain 3"/>
    <property type="match status" value="1"/>
</dbReference>
<dbReference type="SUPFAM" id="SSF55666">
    <property type="entry name" value="Ribonuclease PH domain 2-like"/>
    <property type="match status" value="2"/>
</dbReference>
<dbReference type="SUPFAM" id="SSF54211">
    <property type="entry name" value="Ribosomal protein S5 domain 2-like"/>
    <property type="match status" value="2"/>
</dbReference>
<dbReference type="PROSITE" id="PS50084">
    <property type="entry name" value="KH_TYPE_1"/>
    <property type="match status" value="1"/>
</dbReference>
<dbReference type="PROSITE" id="PS50126">
    <property type="entry name" value="S1"/>
    <property type="match status" value="1"/>
</dbReference>
<organism>
    <name type="scientific">Rhodopseudomonas palustris (strain HaA2)</name>
    <dbReference type="NCBI Taxonomy" id="316058"/>
    <lineage>
        <taxon>Bacteria</taxon>
        <taxon>Pseudomonadati</taxon>
        <taxon>Pseudomonadota</taxon>
        <taxon>Alphaproteobacteria</taxon>
        <taxon>Hyphomicrobiales</taxon>
        <taxon>Nitrobacteraceae</taxon>
        <taxon>Rhodopseudomonas</taxon>
    </lineage>
</organism>
<gene>
    <name evidence="1" type="primary">pnp</name>
    <name type="ordered locus">RPB_0605</name>
</gene>
<protein>
    <recommendedName>
        <fullName evidence="1">Polyribonucleotide nucleotidyltransferase</fullName>
        <ecNumber evidence="1">2.7.7.8</ecNumber>
    </recommendedName>
    <alternativeName>
        <fullName evidence="1">Polynucleotide phosphorylase</fullName>
        <shortName evidence="1">PNPase</shortName>
    </alternativeName>
</protein>
<accession>Q2J2J4</accession>
<keyword id="KW-0963">Cytoplasm</keyword>
<keyword id="KW-0460">Magnesium</keyword>
<keyword id="KW-0479">Metal-binding</keyword>
<keyword id="KW-0548">Nucleotidyltransferase</keyword>
<keyword id="KW-1185">Reference proteome</keyword>
<keyword id="KW-0694">RNA-binding</keyword>
<keyword id="KW-0808">Transferase</keyword>
<reference key="1">
    <citation type="submission" date="2006-01" db="EMBL/GenBank/DDBJ databases">
        <title>Complete sequence of Rhodopseudomonas palustris HaA2.</title>
        <authorList>
            <consortium name="US DOE Joint Genome Institute"/>
            <person name="Copeland A."/>
            <person name="Lucas S."/>
            <person name="Lapidus A."/>
            <person name="Barry K."/>
            <person name="Detter J.C."/>
            <person name="Glavina T."/>
            <person name="Hammon N."/>
            <person name="Israni S."/>
            <person name="Pitluck S."/>
            <person name="Chain P."/>
            <person name="Malfatti S."/>
            <person name="Shin M."/>
            <person name="Vergez L."/>
            <person name="Schmutz J."/>
            <person name="Larimer F."/>
            <person name="Land M."/>
            <person name="Hauser L."/>
            <person name="Pelletier D.A."/>
            <person name="Kyrpides N."/>
            <person name="Anderson I."/>
            <person name="Oda Y."/>
            <person name="Harwood C.S."/>
            <person name="Richardson P."/>
        </authorList>
    </citation>
    <scope>NUCLEOTIDE SEQUENCE [LARGE SCALE GENOMIC DNA]</scope>
    <source>
        <strain>HaA2</strain>
    </source>
</reference>
<feature type="chain" id="PRO_0000329813" description="Polyribonucleotide nucleotidyltransferase">
    <location>
        <begin position="1"/>
        <end position="718"/>
    </location>
</feature>
<feature type="domain" description="KH" evidence="1">
    <location>
        <begin position="554"/>
        <end position="613"/>
    </location>
</feature>
<feature type="domain" description="S1 motif" evidence="1">
    <location>
        <begin position="623"/>
        <end position="691"/>
    </location>
</feature>
<feature type="region of interest" description="Disordered" evidence="2">
    <location>
        <begin position="694"/>
        <end position="718"/>
    </location>
</feature>
<feature type="binding site" evidence="1">
    <location>
        <position position="487"/>
    </location>
    <ligand>
        <name>Mg(2+)</name>
        <dbReference type="ChEBI" id="CHEBI:18420"/>
    </ligand>
</feature>
<feature type="binding site" evidence="1">
    <location>
        <position position="493"/>
    </location>
    <ligand>
        <name>Mg(2+)</name>
        <dbReference type="ChEBI" id="CHEBI:18420"/>
    </ligand>
</feature>
<comment type="function">
    <text evidence="1">Involved in mRNA degradation. Catalyzes the phosphorolysis of single-stranded polyribonucleotides processively in the 3'- to 5'-direction.</text>
</comment>
<comment type="catalytic activity">
    <reaction evidence="1">
        <text>RNA(n+1) + phosphate = RNA(n) + a ribonucleoside 5'-diphosphate</text>
        <dbReference type="Rhea" id="RHEA:22096"/>
        <dbReference type="Rhea" id="RHEA-COMP:14527"/>
        <dbReference type="Rhea" id="RHEA-COMP:17342"/>
        <dbReference type="ChEBI" id="CHEBI:43474"/>
        <dbReference type="ChEBI" id="CHEBI:57930"/>
        <dbReference type="ChEBI" id="CHEBI:140395"/>
        <dbReference type="EC" id="2.7.7.8"/>
    </reaction>
</comment>
<comment type="cofactor">
    <cofactor evidence="1">
        <name>Mg(2+)</name>
        <dbReference type="ChEBI" id="CHEBI:18420"/>
    </cofactor>
</comment>
<comment type="subcellular location">
    <subcellularLocation>
        <location evidence="1">Cytoplasm</location>
    </subcellularLocation>
</comment>
<comment type="similarity">
    <text evidence="1">Belongs to the polyribonucleotide nucleotidyltransferase family.</text>
</comment>
<sequence>MFNKHSVEIDWGGRPLKLETGKVARQADGAVVATYGETIVLATVVAAKTPREGVDFLPLTVDYQEKTYAAGRIPGGYFKREGRPTEKETLVSRLIDRPIRPLFADGWRNETQVIVTVLSHDMENDPDILAMVAASAALTLSGAPFKGPIGAARVGFINDEYVLNPVLDEMPETQLELVVAGTADAVLMVESEAKELSEEIMLGAVMFGHRHFQPVIDAIIELAEKAAKEPRELVVIDDSAIEKEMLGLVEQELRAAYAIPVKQERYAAVGKVKEKAIAHFFPEGEEPKYDKLRIAGVFKELEAKIVRWNILDTGKRIDGRDSKTVRSIIAEAGVLPRAHGSALFTRGETQALVVTTLGTGEDEQYVDSLAGTYKETFLLHYNFPPYSVGETGRLGGTKRREIGHGKLAWRAIRPVLPPHHEFPYTIRVVSEITESNGSSSMASVCGASLALMDAGVPLKRPTAGIAMGLILEGERFAVLSDILGDEDHLGDMDFKVAGTEQGITSLQMDIKIAGITEEIMKVALGQAKDGRIHILGEMSKALDRARAELGEHAPRIETFKIPTDKIREVIGTGGKVIREIVEKTGAKVNIEDDGTVKVASSDGESIKAAIKWIKSIASDPEVGEIYEGTVVKVMEFGAFVNFFGAKDGLVHISQLASGRVQKTSDVVKEGDKVKVKLLGFDDRGKTRLSMRVVDQETGEDLEAKQKAEGEAPAQATGE</sequence>